<accession>A4W2A7</accession>
<sequence>MRRSFYSWLMTQRNPKSNEPVAILADYAFDESDFPKQSDNFDEVSRFLEESASFAFSMSDFDAIWEDYLGH</sequence>
<gene>
    <name type="ordered locus">SSU98_1338</name>
</gene>
<name>Y1338_STRS2</name>
<dbReference type="EMBL" id="CP000408">
    <property type="protein sequence ID" value="ABP92496.1"/>
    <property type="molecule type" value="Genomic_DNA"/>
</dbReference>
<dbReference type="SMR" id="A4W2A7"/>
<dbReference type="KEGG" id="ssv:SSU98_1338"/>
<dbReference type="HOGENOM" id="CLU_177534_1_0_9"/>
<dbReference type="BioCyc" id="SSUI391296:GI2E-1391-MONOMER"/>
<dbReference type="Gene3D" id="1.10.150.260">
    <property type="entry name" value="YozE SAM-like"/>
    <property type="match status" value="1"/>
</dbReference>
<dbReference type="HAMAP" id="MF_01538">
    <property type="entry name" value="UPF0346"/>
    <property type="match status" value="1"/>
</dbReference>
<dbReference type="InterPro" id="IPR010673">
    <property type="entry name" value="UPF0346"/>
</dbReference>
<dbReference type="InterPro" id="IPR023089">
    <property type="entry name" value="YozE_SAM-like"/>
</dbReference>
<dbReference type="InterPro" id="IPR036806">
    <property type="entry name" value="YozE_SAM-like_sf"/>
</dbReference>
<dbReference type="NCBIfam" id="NF010193">
    <property type="entry name" value="PRK13672.1"/>
    <property type="match status" value="1"/>
</dbReference>
<dbReference type="Pfam" id="PF06855">
    <property type="entry name" value="YozE_SAM_like"/>
    <property type="match status" value="1"/>
</dbReference>
<dbReference type="PIRSF" id="PIRSF037262">
    <property type="entry name" value="UCP037262"/>
    <property type="match status" value="1"/>
</dbReference>
<dbReference type="SUPFAM" id="SSF140652">
    <property type="entry name" value="YozE-like"/>
    <property type="match status" value="1"/>
</dbReference>
<evidence type="ECO:0000255" key="1">
    <source>
        <dbReference type="HAMAP-Rule" id="MF_01538"/>
    </source>
</evidence>
<feature type="chain" id="PRO_0000298761" description="UPF0346 protein SSU98_1338">
    <location>
        <begin position="1"/>
        <end position="71"/>
    </location>
</feature>
<protein>
    <recommendedName>
        <fullName evidence="1">UPF0346 protein SSU98_1338</fullName>
    </recommendedName>
</protein>
<organism>
    <name type="scientific">Streptococcus suis (strain 98HAH33)</name>
    <dbReference type="NCBI Taxonomy" id="391296"/>
    <lineage>
        <taxon>Bacteria</taxon>
        <taxon>Bacillati</taxon>
        <taxon>Bacillota</taxon>
        <taxon>Bacilli</taxon>
        <taxon>Lactobacillales</taxon>
        <taxon>Streptococcaceae</taxon>
        <taxon>Streptococcus</taxon>
    </lineage>
</organism>
<reference key="1">
    <citation type="journal article" date="2007" name="PLoS ONE">
        <title>A glimpse of streptococcal toxic shock syndrome from comparative genomics of S. suis 2 Chinese isolates.</title>
        <authorList>
            <person name="Chen C."/>
            <person name="Tang J."/>
            <person name="Dong W."/>
            <person name="Wang C."/>
            <person name="Feng Y."/>
            <person name="Wang J."/>
            <person name="Zheng F."/>
            <person name="Pan X."/>
            <person name="Liu D."/>
            <person name="Li M."/>
            <person name="Song Y."/>
            <person name="Zhu X."/>
            <person name="Sun H."/>
            <person name="Feng T."/>
            <person name="Guo Z."/>
            <person name="Ju A."/>
            <person name="Ge J."/>
            <person name="Dong Y."/>
            <person name="Sun W."/>
            <person name="Jiang Y."/>
            <person name="Wang J."/>
            <person name="Yan J."/>
            <person name="Yang H."/>
            <person name="Wang X."/>
            <person name="Gao G.F."/>
            <person name="Yang R."/>
            <person name="Wang J."/>
            <person name="Yu J."/>
        </authorList>
    </citation>
    <scope>NUCLEOTIDE SEQUENCE [LARGE SCALE GENOMIC DNA]</scope>
    <source>
        <strain>98HAH33</strain>
    </source>
</reference>
<comment type="similarity">
    <text evidence="1">Belongs to the UPF0346 family.</text>
</comment>
<proteinExistence type="inferred from homology"/>